<reference key="1">
    <citation type="journal article" date="2008" name="Genomics">
        <title>Evolution in the laboratory: the genome of Halobacterium salinarum strain R1 compared to that of strain NRC-1.</title>
        <authorList>
            <person name="Pfeiffer F."/>
            <person name="Schuster S.C."/>
            <person name="Broicher A."/>
            <person name="Falb M."/>
            <person name="Palm P."/>
            <person name="Rodewald K."/>
            <person name="Ruepp A."/>
            <person name="Soppa J."/>
            <person name="Tittor J."/>
            <person name="Oesterhelt D."/>
        </authorList>
    </citation>
    <scope>NUCLEOTIDE SEQUENCE [LARGE SCALE GENOMIC DNA]</scope>
    <source>
        <strain>ATCC 29341 / DSM 671 / R1</strain>
    </source>
</reference>
<reference key="2">
    <citation type="journal article" date="2009" name="PLoS ONE">
        <title>Ser/Thr/Tyr protein phosphorylation in the archaeon Halobacterium salinarum--a representative of the third domain of life.</title>
        <authorList>
            <person name="Aivaliotis M."/>
            <person name="Macek B."/>
            <person name="Gnad F."/>
            <person name="Reichelt P."/>
            <person name="Mann M."/>
            <person name="Oesterhelt D."/>
        </authorList>
    </citation>
    <scope>FUNCTION</scope>
    <scope>DISRUPTION PHENOTYPE</scope>
    <source>
        <strain>R1M1</strain>
    </source>
</reference>
<organism>
    <name type="scientific">Halobacterium salinarum (strain ATCC 29341 / DSM 671 / R1)</name>
    <dbReference type="NCBI Taxonomy" id="478009"/>
    <lineage>
        <taxon>Archaea</taxon>
        <taxon>Methanobacteriati</taxon>
        <taxon>Methanobacteriota</taxon>
        <taxon>Stenosarchaea group</taxon>
        <taxon>Halobacteria</taxon>
        <taxon>Halobacteriales</taxon>
        <taxon>Halobacteriaceae</taxon>
        <taxon>Halobacterium</taxon>
        <taxon>Halobacterium salinarum NRC-34001</taxon>
    </lineage>
</organism>
<proteinExistence type="inferred from homology"/>
<dbReference type="EC" id="3.1.3.3"/>
<dbReference type="EMBL" id="AM774415">
    <property type="protein sequence ID" value="CAP14816.2"/>
    <property type="molecule type" value="Genomic_DNA"/>
</dbReference>
<dbReference type="RefSeq" id="WP_049892565.1">
    <property type="nucleotide sequence ID" value="NC_010364.1"/>
</dbReference>
<dbReference type="SMR" id="B0R7U7"/>
<dbReference type="EnsemblBacteria" id="CAP14816">
    <property type="protein sequence ID" value="CAP14816"/>
    <property type="gene ID" value="OE_4405R"/>
</dbReference>
<dbReference type="GeneID" id="68694947"/>
<dbReference type="KEGG" id="hsl:OE_4405R"/>
<dbReference type="HOGENOM" id="CLU_036368_4_3_2"/>
<dbReference type="UniPathway" id="UPA00135">
    <property type="reaction ID" value="UER00198"/>
</dbReference>
<dbReference type="Proteomes" id="UP000001321">
    <property type="component" value="Chromosome"/>
</dbReference>
<dbReference type="GO" id="GO:0005737">
    <property type="term" value="C:cytoplasm"/>
    <property type="evidence" value="ECO:0007669"/>
    <property type="project" value="TreeGrafter"/>
</dbReference>
<dbReference type="GO" id="GO:0036424">
    <property type="term" value="F:L-phosphoserine phosphatase activity"/>
    <property type="evidence" value="ECO:0007669"/>
    <property type="project" value="InterPro"/>
</dbReference>
<dbReference type="GO" id="GO:0000287">
    <property type="term" value="F:magnesium ion binding"/>
    <property type="evidence" value="ECO:0007669"/>
    <property type="project" value="TreeGrafter"/>
</dbReference>
<dbReference type="GO" id="GO:0006564">
    <property type="term" value="P:L-serine biosynthetic process"/>
    <property type="evidence" value="ECO:0007669"/>
    <property type="project" value="UniProtKB-KW"/>
</dbReference>
<dbReference type="FunFam" id="3.40.50.1000:FF:000390">
    <property type="entry name" value="Phosphoserine phosphatase (SerB)"/>
    <property type="match status" value="1"/>
</dbReference>
<dbReference type="Gene3D" id="3.40.50.1000">
    <property type="entry name" value="HAD superfamily/HAD-like"/>
    <property type="match status" value="1"/>
</dbReference>
<dbReference type="InterPro" id="IPR050582">
    <property type="entry name" value="HAD-like_SerB"/>
</dbReference>
<dbReference type="InterPro" id="IPR036412">
    <property type="entry name" value="HAD-like_sf"/>
</dbReference>
<dbReference type="InterPro" id="IPR023214">
    <property type="entry name" value="HAD_sf"/>
</dbReference>
<dbReference type="InterPro" id="IPR004469">
    <property type="entry name" value="PSP"/>
</dbReference>
<dbReference type="NCBIfam" id="TIGR01488">
    <property type="entry name" value="HAD-SF-IB"/>
    <property type="match status" value="1"/>
</dbReference>
<dbReference type="NCBIfam" id="TIGR00338">
    <property type="entry name" value="serB"/>
    <property type="match status" value="1"/>
</dbReference>
<dbReference type="PANTHER" id="PTHR43344">
    <property type="entry name" value="PHOSPHOSERINE PHOSPHATASE"/>
    <property type="match status" value="1"/>
</dbReference>
<dbReference type="PANTHER" id="PTHR43344:SF2">
    <property type="entry name" value="PHOSPHOSERINE PHOSPHATASE"/>
    <property type="match status" value="1"/>
</dbReference>
<dbReference type="Pfam" id="PF12710">
    <property type="entry name" value="HAD"/>
    <property type="match status" value="1"/>
</dbReference>
<dbReference type="SFLD" id="SFLDS00003">
    <property type="entry name" value="Haloacid_Dehalogenase"/>
    <property type="match status" value="1"/>
</dbReference>
<dbReference type="SFLD" id="SFLDF00029">
    <property type="entry name" value="phosphoserine_phosphatase"/>
    <property type="match status" value="1"/>
</dbReference>
<dbReference type="SUPFAM" id="SSF56784">
    <property type="entry name" value="HAD-like"/>
    <property type="match status" value="1"/>
</dbReference>
<accession>B0R7U7</accession>
<name>SERB_HALS3</name>
<sequence>MTLVAFDFDGTLAESEMLDRIAARAGVGDEVAAITERAMRGELSYADSLRERAQLVAGLPESAAAAVYDGVRLRDGAGDLVAKLRDGGVRVVVLTGGFKPGVAAAFDAAGVAADGVVGNRLVAADGELTGAVEGPLVEGTKDDALRDACEAAGTTPAAAVAVGDGANDVPMLDAAGTAIGVDPKPGVDAHCDHTVSSMDALGRVLDDHGIA</sequence>
<feature type="chain" id="PRO_0000428780" description="Phosphoserine phosphatase">
    <location>
        <begin position="1"/>
        <end position="211"/>
    </location>
</feature>
<feature type="active site" description="Nucleophile" evidence="2">
    <location>
        <position position="7"/>
    </location>
</feature>
<feature type="active site" description="Proton donor" evidence="2">
    <location>
        <position position="9"/>
    </location>
</feature>
<feature type="binding site" evidence="2">
    <location>
        <position position="7"/>
    </location>
    <ligand>
        <name>Mg(2+)</name>
        <dbReference type="ChEBI" id="CHEBI:18420"/>
    </ligand>
</feature>
<feature type="binding site" evidence="2">
    <location>
        <position position="9"/>
    </location>
    <ligand>
        <name>Mg(2+)</name>
        <dbReference type="ChEBI" id="CHEBI:18420"/>
    </ligand>
</feature>
<feature type="binding site" evidence="2">
    <location>
        <position position="16"/>
    </location>
    <ligand>
        <name>substrate</name>
    </ligand>
</feature>
<feature type="binding site" evidence="2">
    <location>
        <position position="52"/>
    </location>
    <ligand>
        <name>substrate</name>
    </ligand>
</feature>
<feature type="binding site" evidence="2">
    <location>
        <begin position="95"/>
        <end position="96"/>
    </location>
    <ligand>
        <name>substrate</name>
    </ligand>
</feature>
<feature type="binding site" evidence="2">
    <location>
        <position position="141"/>
    </location>
    <ligand>
        <name>substrate</name>
    </ligand>
</feature>
<feature type="binding site" evidence="2">
    <location>
        <position position="164"/>
    </location>
    <ligand>
        <name>Mg(2+)</name>
        <dbReference type="ChEBI" id="CHEBI:18420"/>
    </ligand>
</feature>
<feature type="binding site" evidence="2">
    <location>
        <position position="167"/>
    </location>
    <ligand>
        <name>substrate</name>
    </ligand>
</feature>
<comment type="function">
    <text evidence="3">Catalyzes the dephosphorylation of phosphoserine (P-Ser).</text>
</comment>
<comment type="catalytic activity">
    <reaction>
        <text>O-phospho-L-serine + H2O = L-serine + phosphate</text>
        <dbReference type="Rhea" id="RHEA:21208"/>
        <dbReference type="ChEBI" id="CHEBI:15377"/>
        <dbReference type="ChEBI" id="CHEBI:33384"/>
        <dbReference type="ChEBI" id="CHEBI:43474"/>
        <dbReference type="ChEBI" id="CHEBI:57524"/>
        <dbReference type="EC" id="3.1.3.3"/>
    </reaction>
</comment>
<comment type="catalytic activity">
    <reaction>
        <text>O-phospho-D-serine + H2O = D-serine + phosphate</text>
        <dbReference type="Rhea" id="RHEA:24873"/>
        <dbReference type="ChEBI" id="CHEBI:15377"/>
        <dbReference type="ChEBI" id="CHEBI:35247"/>
        <dbReference type="ChEBI" id="CHEBI:43474"/>
        <dbReference type="ChEBI" id="CHEBI:58680"/>
        <dbReference type="EC" id="3.1.3.3"/>
    </reaction>
</comment>
<comment type="cofactor">
    <cofactor evidence="1">
        <name>Mg(2+)</name>
        <dbReference type="ChEBI" id="CHEBI:18420"/>
    </cofactor>
    <text evidence="1">Binds 1 Mg(2+) ion per subunit.</text>
</comment>
<comment type="pathway">
    <text>Amino-acid biosynthesis; L-serine biosynthesis; L-serine from 3-phospho-D-glycerate: step 3/3.</text>
</comment>
<comment type="disruption phenotype">
    <text evidence="3">Strong increase of Ser protein phosphorylation.</text>
</comment>
<comment type="similarity">
    <text evidence="4">Belongs to the HAD-like hydrolase superfamily. SerB family.</text>
</comment>
<evidence type="ECO:0000250" key="1"/>
<evidence type="ECO:0000250" key="2">
    <source>
        <dbReference type="UniProtKB" id="Q58989"/>
    </source>
</evidence>
<evidence type="ECO:0000269" key="3">
    <source>
    </source>
</evidence>
<evidence type="ECO:0000305" key="4"/>
<keyword id="KW-0028">Amino-acid biosynthesis</keyword>
<keyword id="KW-0378">Hydrolase</keyword>
<keyword id="KW-0460">Magnesium</keyword>
<keyword id="KW-0479">Metal-binding</keyword>
<keyword id="KW-0718">Serine biosynthesis</keyword>
<protein>
    <recommendedName>
        <fullName>Phosphoserine phosphatase</fullName>
        <shortName>PSP</shortName>
        <shortName>PSPase</shortName>
        <ecNumber>3.1.3.3</ecNumber>
    </recommendedName>
    <alternativeName>
        <fullName>O-phosphoserine phosphohydrolase</fullName>
    </alternativeName>
</protein>
<gene>
    <name type="primary">serB</name>
    <name type="ordered locus">OE_4405R</name>
</gene>